<name>OBG_STRPN</name>
<accession>Q97QW8</accession>
<sequence length="434" mass="48130">MFLDTAKIKVKAGNGGDGMVAFRREKYVPNGGPWGGDGGRGGNVVFVVDEGLRTLMDFRYNRHFKADSGEKGMTKGMHGRGAEDLRVRVPQGTTVRDAETGKVLTDLIEHGQEFIVAHGGRGGRGNIRFATPKNPAPEISENGEPGQERELQLELKILADVGLVGFPSVGKSTLLSVITSAKPKIGAYHFTTIVPNLGMVRTQSGESFAVADLPGLIEGASQGVGLGTQFLRHIERTRVILHIIDMSASEGRDPYEDYLAINKELESYNLRLMERPQIIVANKMDMPESQENLEDFKKKLAENYDEFEELPAIFPISGLTKQGLATLLDATAELLDKTPEFLLYDESDMEEEAYYGFDEEEKAFEISRDDDATWVLSGEKLMKLFNMTNFDRDESVMKFARQLRGMGVDEALRARGAKDGDLVRIGKFEFEFVD</sequence>
<organism>
    <name type="scientific">Streptococcus pneumoniae serotype 4 (strain ATCC BAA-334 / TIGR4)</name>
    <dbReference type="NCBI Taxonomy" id="170187"/>
    <lineage>
        <taxon>Bacteria</taxon>
        <taxon>Bacillati</taxon>
        <taxon>Bacillota</taxon>
        <taxon>Bacilli</taxon>
        <taxon>Lactobacillales</taxon>
        <taxon>Streptococcaceae</taxon>
        <taxon>Streptococcus</taxon>
    </lineage>
</organism>
<feature type="chain" id="PRO_0000386297" description="GTPase Obg">
    <location>
        <begin position="1"/>
        <end position="434"/>
    </location>
</feature>
<feature type="domain" description="Obg" evidence="3">
    <location>
        <begin position="1"/>
        <end position="158"/>
    </location>
</feature>
<feature type="domain" description="OBG-type G" evidence="1">
    <location>
        <begin position="159"/>
        <end position="336"/>
    </location>
</feature>
<feature type="domain" description="OCT" evidence="2">
    <location>
        <begin position="356"/>
        <end position="434"/>
    </location>
</feature>
<feature type="binding site" evidence="1">
    <location>
        <begin position="165"/>
        <end position="172"/>
    </location>
    <ligand>
        <name>GTP</name>
        <dbReference type="ChEBI" id="CHEBI:37565"/>
    </ligand>
</feature>
<feature type="binding site" evidence="1">
    <location>
        <position position="172"/>
    </location>
    <ligand>
        <name>Mg(2+)</name>
        <dbReference type="ChEBI" id="CHEBI:18420"/>
    </ligand>
</feature>
<feature type="binding site" evidence="1">
    <location>
        <begin position="190"/>
        <end position="194"/>
    </location>
    <ligand>
        <name>GTP</name>
        <dbReference type="ChEBI" id="CHEBI:37565"/>
    </ligand>
</feature>
<feature type="binding site" evidence="1">
    <location>
        <position position="192"/>
    </location>
    <ligand>
        <name>Mg(2+)</name>
        <dbReference type="ChEBI" id="CHEBI:18420"/>
    </ligand>
</feature>
<feature type="binding site" evidence="1">
    <location>
        <begin position="212"/>
        <end position="215"/>
    </location>
    <ligand>
        <name>GTP</name>
        <dbReference type="ChEBI" id="CHEBI:37565"/>
    </ligand>
</feature>
<feature type="binding site" evidence="1">
    <location>
        <begin position="282"/>
        <end position="285"/>
    </location>
    <ligand>
        <name>GTP</name>
        <dbReference type="ChEBI" id="CHEBI:37565"/>
    </ligand>
</feature>
<feature type="binding site" evidence="1">
    <location>
        <begin position="317"/>
        <end position="319"/>
    </location>
    <ligand>
        <name>GTP</name>
        <dbReference type="ChEBI" id="CHEBI:37565"/>
    </ligand>
</feature>
<dbReference type="EC" id="3.6.5.-" evidence="1"/>
<dbReference type="EMBL" id="AE005672">
    <property type="protein sequence ID" value="AAK75192.1"/>
    <property type="molecule type" value="Genomic_DNA"/>
</dbReference>
<dbReference type="PIR" id="G95124">
    <property type="entry name" value="G95124"/>
</dbReference>
<dbReference type="SMR" id="Q97QW8"/>
<dbReference type="PaxDb" id="170187-SP_1079"/>
<dbReference type="EnsemblBacteria" id="AAK75192">
    <property type="protein sequence ID" value="AAK75192"/>
    <property type="gene ID" value="SP_1079"/>
</dbReference>
<dbReference type="KEGG" id="spn:SP_1079"/>
<dbReference type="eggNOG" id="COG0536">
    <property type="taxonomic scope" value="Bacteria"/>
</dbReference>
<dbReference type="PhylomeDB" id="Q97QW8"/>
<dbReference type="Proteomes" id="UP000000585">
    <property type="component" value="Chromosome"/>
</dbReference>
<dbReference type="GO" id="GO:0005737">
    <property type="term" value="C:cytoplasm"/>
    <property type="evidence" value="ECO:0007669"/>
    <property type="project" value="UniProtKB-SubCell"/>
</dbReference>
<dbReference type="GO" id="GO:0005525">
    <property type="term" value="F:GTP binding"/>
    <property type="evidence" value="ECO:0007669"/>
    <property type="project" value="UniProtKB-UniRule"/>
</dbReference>
<dbReference type="GO" id="GO:0003924">
    <property type="term" value="F:GTPase activity"/>
    <property type="evidence" value="ECO:0007669"/>
    <property type="project" value="UniProtKB-UniRule"/>
</dbReference>
<dbReference type="GO" id="GO:0000287">
    <property type="term" value="F:magnesium ion binding"/>
    <property type="evidence" value="ECO:0007669"/>
    <property type="project" value="InterPro"/>
</dbReference>
<dbReference type="GO" id="GO:0042254">
    <property type="term" value="P:ribosome biogenesis"/>
    <property type="evidence" value="ECO:0007669"/>
    <property type="project" value="UniProtKB-UniRule"/>
</dbReference>
<dbReference type="CDD" id="cd01898">
    <property type="entry name" value="Obg"/>
    <property type="match status" value="1"/>
</dbReference>
<dbReference type="FunFam" id="2.70.210.12:FF:000001">
    <property type="entry name" value="GTPase Obg"/>
    <property type="match status" value="1"/>
</dbReference>
<dbReference type="FunFam" id="3.40.50.300:FF:000515">
    <property type="entry name" value="GTPase Obg"/>
    <property type="match status" value="1"/>
</dbReference>
<dbReference type="Gene3D" id="3.30.300.350">
    <property type="entry name" value="GTP-binding protein OBG, C-terminal domain"/>
    <property type="match status" value="1"/>
</dbReference>
<dbReference type="Gene3D" id="2.70.210.12">
    <property type="entry name" value="GTP1/OBG domain"/>
    <property type="match status" value="1"/>
</dbReference>
<dbReference type="Gene3D" id="3.40.50.300">
    <property type="entry name" value="P-loop containing nucleotide triphosphate hydrolases"/>
    <property type="match status" value="1"/>
</dbReference>
<dbReference type="HAMAP" id="MF_01454">
    <property type="entry name" value="GTPase_Obg"/>
    <property type="match status" value="1"/>
</dbReference>
<dbReference type="InterPro" id="IPR031167">
    <property type="entry name" value="G_OBG"/>
</dbReference>
<dbReference type="InterPro" id="IPR006073">
    <property type="entry name" value="GTP-bd"/>
</dbReference>
<dbReference type="InterPro" id="IPR014100">
    <property type="entry name" value="GTP-bd_Obg/CgtA"/>
</dbReference>
<dbReference type="InterPro" id="IPR036346">
    <property type="entry name" value="GTP-bd_prot_GTP1/OBG_C_sf"/>
</dbReference>
<dbReference type="InterPro" id="IPR006074">
    <property type="entry name" value="GTP1-OBG_CS"/>
</dbReference>
<dbReference type="InterPro" id="IPR006169">
    <property type="entry name" value="GTP1_OBG_dom"/>
</dbReference>
<dbReference type="InterPro" id="IPR036726">
    <property type="entry name" value="GTP1_OBG_dom_sf"/>
</dbReference>
<dbReference type="InterPro" id="IPR045086">
    <property type="entry name" value="OBG_GTPase"/>
</dbReference>
<dbReference type="InterPro" id="IPR015349">
    <property type="entry name" value="OCT_dom"/>
</dbReference>
<dbReference type="InterPro" id="IPR027417">
    <property type="entry name" value="P-loop_NTPase"/>
</dbReference>
<dbReference type="InterPro" id="IPR005225">
    <property type="entry name" value="Small_GTP-bd"/>
</dbReference>
<dbReference type="NCBIfam" id="TIGR02729">
    <property type="entry name" value="Obg_CgtA"/>
    <property type="match status" value="1"/>
</dbReference>
<dbReference type="NCBIfam" id="TIGR03595">
    <property type="entry name" value="Obg_CgtA_exten"/>
    <property type="match status" value="1"/>
</dbReference>
<dbReference type="NCBIfam" id="NF008954">
    <property type="entry name" value="PRK12296.1"/>
    <property type="match status" value="1"/>
</dbReference>
<dbReference type="NCBIfam" id="NF008955">
    <property type="entry name" value="PRK12297.1"/>
    <property type="match status" value="1"/>
</dbReference>
<dbReference type="NCBIfam" id="NF008956">
    <property type="entry name" value="PRK12299.1"/>
    <property type="match status" value="1"/>
</dbReference>
<dbReference type="NCBIfam" id="TIGR00231">
    <property type="entry name" value="small_GTP"/>
    <property type="match status" value="1"/>
</dbReference>
<dbReference type="PANTHER" id="PTHR11702">
    <property type="entry name" value="DEVELOPMENTALLY REGULATED GTP-BINDING PROTEIN-RELATED"/>
    <property type="match status" value="1"/>
</dbReference>
<dbReference type="PANTHER" id="PTHR11702:SF31">
    <property type="entry name" value="MITOCHONDRIAL RIBOSOME-ASSOCIATED GTPASE 2"/>
    <property type="match status" value="1"/>
</dbReference>
<dbReference type="Pfam" id="PF09269">
    <property type="entry name" value="DUF1967"/>
    <property type="match status" value="1"/>
</dbReference>
<dbReference type="Pfam" id="PF01018">
    <property type="entry name" value="GTP1_OBG"/>
    <property type="match status" value="1"/>
</dbReference>
<dbReference type="Pfam" id="PF01926">
    <property type="entry name" value="MMR_HSR1"/>
    <property type="match status" value="1"/>
</dbReference>
<dbReference type="PIRSF" id="PIRSF002401">
    <property type="entry name" value="GTP_bd_Obg/CgtA"/>
    <property type="match status" value="1"/>
</dbReference>
<dbReference type="PRINTS" id="PR00326">
    <property type="entry name" value="GTP1OBG"/>
</dbReference>
<dbReference type="SUPFAM" id="SSF102741">
    <property type="entry name" value="Obg GTP-binding protein C-terminal domain"/>
    <property type="match status" value="1"/>
</dbReference>
<dbReference type="SUPFAM" id="SSF82051">
    <property type="entry name" value="Obg GTP-binding protein N-terminal domain"/>
    <property type="match status" value="1"/>
</dbReference>
<dbReference type="SUPFAM" id="SSF52540">
    <property type="entry name" value="P-loop containing nucleoside triphosphate hydrolases"/>
    <property type="match status" value="1"/>
</dbReference>
<dbReference type="PROSITE" id="PS51710">
    <property type="entry name" value="G_OBG"/>
    <property type="match status" value="1"/>
</dbReference>
<dbReference type="PROSITE" id="PS00905">
    <property type="entry name" value="GTP1_OBG"/>
    <property type="match status" value="1"/>
</dbReference>
<dbReference type="PROSITE" id="PS51883">
    <property type="entry name" value="OBG"/>
    <property type="match status" value="1"/>
</dbReference>
<dbReference type="PROSITE" id="PS51881">
    <property type="entry name" value="OCT"/>
    <property type="match status" value="1"/>
</dbReference>
<evidence type="ECO:0000255" key="1">
    <source>
        <dbReference type="HAMAP-Rule" id="MF_01454"/>
    </source>
</evidence>
<evidence type="ECO:0000255" key="2">
    <source>
        <dbReference type="PROSITE-ProRule" id="PRU01229"/>
    </source>
</evidence>
<evidence type="ECO:0000255" key="3">
    <source>
        <dbReference type="PROSITE-ProRule" id="PRU01231"/>
    </source>
</evidence>
<proteinExistence type="inferred from homology"/>
<keyword id="KW-0963">Cytoplasm</keyword>
<keyword id="KW-0342">GTP-binding</keyword>
<keyword id="KW-0378">Hydrolase</keyword>
<keyword id="KW-0460">Magnesium</keyword>
<keyword id="KW-0479">Metal-binding</keyword>
<keyword id="KW-0547">Nucleotide-binding</keyword>
<keyword id="KW-1185">Reference proteome</keyword>
<reference key="1">
    <citation type="journal article" date="2001" name="Science">
        <title>Complete genome sequence of a virulent isolate of Streptococcus pneumoniae.</title>
        <authorList>
            <person name="Tettelin H."/>
            <person name="Nelson K.E."/>
            <person name="Paulsen I.T."/>
            <person name="Eisen J.A."/>
            <person name="Read T.D."/>
            <person name="Peterson S.N."/>
            <person name="Heidelberg J.F."/>
            <person name="DeBoy R.T."/>
            <person name="Haft D.H."/>
            <person name="Dodson R.J."/>
            <person name="Durkin A.S."/>
            <person name="Gwinn M.L."/>
            <person name="Kolonay J.F."/>
            <person name="Nelson W.C."/>
            <person name="Peterson J.D."/>
            <person name="Umayam L.A."/>
            <person name="White O."/>
            <person name="Salzberg S.L."/>
            <person name="Lewis M.R."/>
            <person name="Radune D."/>
            <person name="Holtzapple E.K."/>
            <person name="Khouri H.M."/>
            <person name="Wolf A.M."/>
            <person name="Utterback T.R."/>
            <person name="Hansen C.L."/>
            <person name="McDonald L.A."/>
            <person name="Feldblyum T.V."/>
            <person name="Angiuoli S.V."/>
            <person name="Dickinson T."/>
            <person name="Hickey E.K."/>
            <person name="Holt I.E."/>
            <person name="Loftus B.J."/>
            <person name="Yang F."/>
            <person name="Smith H.O."/>
            <person name="Venter J.C."/>
            <person name="Dougherty B.A."/>
            <person name="Morrison D.A."/>
            <person name="Hollingshead S.K."/>
            <person name="Fraser C.M."/>
        </authorList>
    </citation>
    <scope>NUCLEOTIDE SEQUENCE [LARGE SCALE GENOMIC DNA]</scope>
    <source>
        <strain>ATCC BAA-334 / TIGR4</strain>
    </source>
</reference>
<comment type="function">
    <text evidence="1">An essential GTPase which binds GTP, GDP and possibly (p)ppGpp with moderate affinity, with high nucleotide exchange rates and a fairly low GTP hydrolysis rate. Plays a role in control of the cell cycle, stress response, ribosome biogenesis and in those bacteria that undergo differentiation, in morphogenesis control.</text>
</comment>
<comment type="cofactor">
    <cofactor evidence="1">
        <name>Mg(2+)</name>
        <dbReference type="ChEBI" id="CHEBI:18420"/>
    </cofactor>
</comment>
<comment type="subunit">
    <text evidence="1">Monomer.</text>
</comment>
<comment type="subcellular location">
    <subcellularLocation>
        <location evidence="1">Cytoplasm</location>
    </subcellularLocation>
</comment>
<comment type="similarity">
    <text evidence="1">Belongs to the TRAFAC class OBG-HflX-like GTPase superfamily. OBG GTPase family.</text>
</comment>
<gene>
    <name evidence="1" type="primary">obg</name>
    <name type="ordered locus">SP_1079</name>
</gene>
<protein>
    <recommendedName>
        <fullName evidence="1">GTPase Obg</fullName>
        <ecNumber evidence="1">3.6.5.-</ecNumber>
    </recommendedName>
    <alternativeName>
        <fullName evidence="1">GTP-binding protein Obg</fullName>
    </alternativeName>
</protein>